<comment type="function">
    <text evidence="1">Catalyzes the isomerization between 2-isopropylmalate and 3-isopropylmalate, via the formation of 2-isopropylmaleate.</text>
</comment>
<comment type="catalytic activity">
    <reaction evidence="1">
        <text>(2R,3S)-3-isopropylmalate = (2S)-2-isopropylmalate</text>
        <dbReference type="Rhea" id="RHEA:32287"/>
        <dbReference type="ChEBI" id="CHEBI:1178"/>
        <dbReference type="ChEBI" id="CHEBI:35121"/>
        <dbReference type="EC" id="4.2.1.33"/>
    </reaction>
</comment>
<comment type="pathway">
    <text evidence="1">Amino-acid biosynthesis; L-leucine biosynthesis; L-leucine from 3-methyl-2-oxobutanoate: step 2/4.</text>
</comment>
<comment type="subunit">
    <text evidence="1">Heterodimer of LeuC and LeuD.</text>
</comment>
<comment type="similarity">
    <text evidence="1">Belongs to the LeuD family. LeuD type 1 subfamily.</text>
</comment>
<proteinExistence type="inferred from homology"/>
<dbReference type="EC" id="4.2.1.33" evidence="1"/>
<dbReference type="EMBL" id="CP001321">
    <property type="protein sequence ID" value="ACL32019.1"/>
    <property type="molecule type" value="Genomic_DNA"/>
</dbReference>
<dbReference type="RefSeq" id="WP_005713658.1">
    <property type="nucleotide sequence ID" value="NC_011852.1"/>
</dbReference>
<dbReference type="SMR" id="B8F3W7"/>
<dbReference type="STRING" id="557723.HAPS_0335"/>
<dbReference type="GeneID" id="66618770"/>
<dbReference type="KEGG" id="hap:HAPS_0335"/>
<dbReference type="HOGENOM" id="CLU_081378_0_3_6"/>
<dbReference type="UniPathway" id="UPA00048">
    <property type="reaction ID" value="UER00071"/>
</dbReference>
<dbReference type="Proteomes" id="UP000006743">
    <property type="component" value="Chromosome"/>
</dbReference>
<dbReference type="GO" id="GO:0009316">
    <property type="term" value="C:3-isopropylmalate dehydratase complex"/>
    <property type="evidence" value="ECO:0007669"/>
    <property type="project" value="InterPro"/>
</dbReference>
<dbReference type="GO" id="GO:0003861">
    <property type="term" value="F:3-isopropylmalate dehydratase activity"/>
    <property type="evidence" value="ECO:0007669"/>
    <property type="project" value="UniProtKB-UniRule"/>
</dbReference>
<dbReference type="GO" id="GO:0009098">
    <property type="term" value="P:L-leucine biosynthetic process"/>
    <property type="evidence" value="ECO:0007669"/>
    <property type="project" value="UniProtKB-UniRule"/>
</dbReference>
<dbReference type="CDD" id="cd01577">
    <property type="entry name" value="IPMI_Swivel"/>
    <property type="match status" value="1"/>
</dbReference>
<dbReference type="FunFam" id="3.20.19.10:FF:000003">
    <property type="entry name" value="3-isopropylmalate dehydratase small subunit"/>
    <property type="match status" value="1"/>
</dbReference>
<dbReference type="Gene3D" id="3.20.19.10">
    <property type="entry name" value="Aconitase, domain 4"/>
    <property type="match status" value="1"/>
</dbReference>
<dbReference type="HAMAP" id="MF_01031">
    <property type="entry name" value="LeuD_type1"/>
    <property type="match status" value="1"/>
</dbReference>
<dbReference type="InterPro" id="IPR004431">
    <property type="entry name" value="3-IsopropMal_deHydase_ssu"/>
</dbReference>
<dbReference type="InterPro" id="IPR015928">
    <property type="entry name" value="Aconitase/3IPM_dehydase_swvl"/>
</dbReference>
<dbReference type="InterPro" id="IPR000573">
    <property type="entry name" value="AconitaseA/IPMdHydase_ssu_swvl"/>
</dbReference>
<dbReference type="InterPro" id="IPR033940">
    <property type="entry name" value="IPMI_Swivel"/>
</dbReference>
<dbReference type="InterPro" id="IPR050075">
    <property type="entry name" value="LeuD"/>
</dbReference>
<dbReference type="NCBIfam" id="TIGR00171">
    <property type="entry name" value="leuD"/>
    <property type="match status" value="1"/>
</dbReference>
<dbReference type="NCBIfam" id="NF002458">
    <property type="entry name" value="PRK01641.1"/>
    <property type="match status" value="1"/>
</dbReference>
<dbReference type="PANTHER" id="PTHR43345:SF5">
    <property type="entry name" value="3-ISOPROPYLMALATE DEHYDRATASE SMALL SUBUNIT"/>
    <property type="match status" value="1"/>
</dbReference>
<dbReference type="PANTHER" id="PTHR43345">
    <property type="entry name" value="3-ISOPROPYLMALATE DEHYDRATASE SMALL SUBUNIT 2-RELATED-RELATED"/>
    <property type="match status" value="1"/>
</dbReference>
<dbReference type="Pfam" id="PF00694">
    <property type="entry name" value="Aconitase_C"/>
    <property type="match status" value="1"/>
</dbReference>
<dbReference type="SUPFAM" id="SSF52016">
    <property type="entry name" value="LeuD/IlvD-like"/>
    <property type="match status" value="1"/>
</dbReference>
<sequence length="201" mass="22742">MAKEFKQHTGLAVPLDASHVDTDAIIPKQFLQKVTRVGFGAHLFHEWRFLDDEGKQPNPDFVLNFPRYQGASILLARENFGCGSSREHAPWALDDYGIRAIIAPSFADIFYGNSLNNQMLPVRLSEEEVDELFKYVEANEGATITVDLEAQTVSANGKTYHFEIDSFRRHCLLNGLDNIGLTLQHEEKIADYESKIPAFLR</sequence>
<evidence type="ECO:0000255" key="1">
    <source>
        <dbReference type="HAMAP-Rule" id="MF_01031"/>
    </source>
</evidence>
<gene>
    <name evidence="1" type="primary">leuD</name>
    <name type="ordered locus">HAPS_0335</name>
</gene>
<organism>
    <name type="scientific">Glaesserella parasuis serovar 5 (strain SH0165)</name>
    <name type="common">Haemophilus parasuis</name>
    <dbReference type="NCBI Taxonomy" id="557723"/>
    <lineage>
        <taxon>Bacteria</taxon>
        <taxon>Pseudomonadati</taxon>
        <taxon>Pseudomonadota</taxon>
        <taxon>Gammaproteobacteria</taxon>
        <taxon>Pasteurellales</taxon>
        <taxon>Pasteurellaceae</taxon>
        <taxon>Glaesserella</taxon>
    </lineage>
</organism>
<reference key="1">
    <citation type="journal article" date="2009" name="J. Bacteriol.">
        <title>Complete genome sequence of Haemophilus parasuis SH0165.</title>
        <authorList>
            <person name="Yue M."/>
            <person name="Yang F."/>
            <person name="Yang J."/>
            <person name="Bei W."/>
            <person name="Cai X."/>
            <person name="Chen L."/>
            <person name="Dong J."/>
            <person name="Zhou R."/>
            <person name="Jin M."/>
            <person name="Jin Q."/>
            <person name="Chen H."/>
        </authorList>
    </citation>
    <scope>NUCLEOTIDE SEQUENCE [LARGE SCALE GENOMIC DNA]</scope>
    <source>
        <strain>SH0165</strain>
    </source>
</reference>
<feature type="chain" id="PRO_1000149415" description="3-isopropylmalate dehydratase small subunit">
    <location>
        <begin position="1"/>
        <end position="201"/>
    </location>
</feature>
<protein>
    <recommendedName>
        <fullName evidence="1">3-isopropylmalate dehydratase small subunit</fullName>
        <ecNumber evidence="1">4.2.1.33</ecNumber>
    </recommendedName>
    <alternativeName>
        <fullName evidence="1">Alpha-IPM isomerase</fullName>
        <shortName evidence="1">IPMI</shortName>
    </alternativeName>
    <alternativeName>
        <fullName evidence="1">Isopropylmalate isomerase</fullName>
    </alternativeName>
</protein>
<keyword id="KW-0028">Amino-acid biosynthesis</keyword>
<keyword id="KW-0100">Branched-chain amino acid biosynthesis</keyword>
<keyword id="KW-0432">Leucine biosynthesis</keyword>
<keyword id="KW-0456">Lyase</keyword>
<keyword id="KW-1185">Reference proteome</keyword>
<accession>B8F3W7</accession>
<name>LEUD_GLAP5</name>